<keyword id="KW-0963">Cytoplasm</keyword>
<keyword id="KW-0251">Elongation factor</keyword>
<keyword id="KW-0648">Protein biosynthesis</keyword>
<keyword id="KW-1185">Reference proteome</keyword>
<protein>
    <recommendedName>
        <fullName evidence="1">Elongation factor P</fullName>
        <shortName evidence="1">EF-P</shortName>
    </recommendedName>
</protein>
<name>EFP_MYCMM</name>
<gene>
    <name evidence="1" type="primary">efp</name>
    <name type="ordered locus">MMAR_2181</name>
</gene>
<evidence type="ECO:0000255" key="1">
    <source>
        <dbReference type="HAMAP-Rule" id="MF_00141"/>
    </source>
</evidence>
<reference key="1">
    <citation type="journal article" date="2008" name="Genome Res.">
        <title>Insights from the complete genome sequence of Mycobacterium marinum on the evolution of Mycobacterium tuberculosis.</title>
        <authorList>
            <person name="Stinear T.P."/>
            <person name="Seemann T."/>
            <person name="Harrison P.F."/>
            <person name="Jenkin G.A."/>
            <person name="Davies J.K."/>
            <person name="Johnson P.D."/>
            <person name="Abdellah Z."/>
            <person name="Arrowsmith C."/>
            <person name="Chillingworth T."/>
            <person name="Churcher C."/>
            <person name="Clarke K."/>
            <person name="Cronin A."/>
            <person name="Davis P."/>
            <person name="Goodhead I."/>
            <person name="Holroyd N."/>
            <person name="Jagels K."/>
            <person name="Lord A."/>
            <person name="Moule S."/>
            <person name="Mungall K."/>
            <person name="Norbertczak H."/>
            <person name="Quail M.A."/>
            <person name="Rabbinowitsch E."/>
            <person name="Walker D."/>
            <person name="White B."/>
            <person name="Whitehead S."/>
            <person name="Small P.L."/>
            <person name="Brosch R."/>
            <person name="Ramakrishnan L."/>
            <person name="Fischbach M.A."/>
            <person name="Parkhill J."/>
            <person name="Cole S.T."/>
        </authorList>
    </citation>
    <scope>NUCLEOTIDE SEQUENCE [LARGE SCALE GENOMIC DNA]</scope>
    <source>
        <strain>ATCC BAA-535 / M</strain>
    </source>
</reference>
<proteinExistence type="inferred from homology"/>
<feature type="chain" id="PRO_1000096180" description="Elongation factor P">
    <location>
        <begin position="1"/>
        <end position="187"/>
    </location>
</feature>
<comment type="function">
    <text evidence="1">Involved in peptide bond synthesis. Stimulates efficient translation and peptide-bond synthesis on native or reconstituted 70S ribosomes in vitro. Probably functions indirectly by altering the affinity of the ribosome for aminoacyl-tRNA, thus increasing their reactivity as acceptors for peptidyl transferase.</text>
</comment>
<comment type="pathway">
    <text evidence="1">Protein biosynthesis; polypeptide chain elongation.</text>
</comment>
<comment type="subcellular location">
    <subcellularLocation>
        <location evidence="1">Cytoplasm</location>
    </subcellularLocation>
</comment>
<comment type="similarity">
    <text evidence="1">Belongs to the elongation factor P family.</text>
</comment>
<organism>
    <name type="scientific">Mycobacterium marinum (strain ATCC BAA-535 / M)</name>
    <dbReference type="NCBI Taxonomy" id="216594"/>
    <lineage>
        <taxon>Bacteria</taxon>
        <taxon>Bacillati</taxon>
        <taxon>Actinomycetota</taxon>
        <taxon>Actinomycetes</taxon>
        <taxon>Mycobacteriales</taxon>
        <taxon>Mycobacteriaceae</taxon>
        <taxon>Mycobacterium</taxon>
        <taxon>Mycobacterium ulcerans group</taxon>
    </lineage>
</organism>
<accession>B2HND2</accession>
<sequence length="187" mass="20366">MASTADFKNGLVLQIDGQLWSIVEFQHVKPGKGPAFVRTKLKNVLSGKVVDKTYNAGVKVETATVDRRDTTYLYRDGSDFVFMDSQDYEQHPLPESLVGDAARFLLEGMPVQVAFHDGAPLYIELPVTVEIVVTHTEPGLQGDRSSAGTKPATLETGAQINVPLFINTGDKLKVDSRDGGYLGRVNA</sequence>
<dbReference type="EMBL" id="CP000854">
    <property type="protein sequence ID" value="ACC40630.1"/>
    <property type="molecule type" value="Genomic_DNA"/>
</dbReference>
<dbReference type="RefSeq" id="WP_012393946.1">
    <property type="nucleotide sequence ID" value="NC_010612.1"/>
</dbReference>
<dbReference type="SMR" id="B2HND2"/>
<dbReference type="STRING" id="216594.MMAR_2181"/>
<dbReference type="KEGG" id="mmi:MMAR_2181"/>
<dbReference type="eggNOG" id="COG0231">
    <property type="taxonomic scope" value="Bacteria"/>
</dbReference>
<dbReference type="HOGENOM" id="CLU_074944_0_1_11"/>
<dbReference type="OrthoDB" id="9801844at2"/>
<dbReference type="UniPathway" id="UPA00345"/>
<dbReference type="Proteomes" id="UP000001190">
    <property type="component" value="Chromosome"/>
</dbReference>
<dbReference type="GO" id="GO:0005737">
    <property type="term" value="C:cytoplasm"/>
    <property type="evidence" value="ECO:0007669"/>
    <property type="project" value="UniProtKB-SubCell"/>
</dbReference>
<dbReference type="GO" id="GO:0003746">
    <property type="term" value="F:translation elongation factor activity"/>
    <property type="evidence" value="ECO:0007669"/>
    <property type="project" value="UniProtKB-UniRule"/>
</dbReference>
<dbReference type="GO" id="GO:0043043">
    <property type="term" value="P:peptide biosynthetic process"/>
    <property type="evidence" value="ECO:0007669"/>
    <property type="project" value="InterPro"/>
</dbReference>
<dbReference type="CDD" id="cd04470">
    <property type="entry name" value="S1_EF-P_repeat_1"/>
    <property type="match status" value="1"/>
</dbReference>
<dbReference type="CDD" id="cd05794">
    <property type="entry name" value="S1_EF-P_repeat_2"/>
    <property type="match status" value="1"/>
</dbReference>
<dbReference type="FunFam" id="2.30.30.30:FF:000003">
    <property type="entry name" value="Elongation factor P"/>
    <property type="match status" value="1"/>
</dbReference>
<dbReference type="FunFam" id="2.40.50.140:FF:000004">
    <property type="entry name" value="Elongation factor P"/>
    <property type="match status" value="1"/>
</dbReference>
<dbReference type="FunFam" id="2.40.50.140:FF:000009">
    <property type="entry name" value="Elongation factor P"/>
    <property type="match status" value="1"/>
</dbReference>
<dbReference type="Gene3D" id="2.30.30.30">
    <property type="match status" value="1"/>
</dbReference>
<dbReference type="Gene3D" id="2.40.50.140">
    <property type="entry name" value="Nucleic acid-binding proteins"/>
    <property type="match status" value="2"/>
</dbReference>
<dbReference type="HAMAP" id="MF_00141">
    <property type="entry name" value="EF_P"/>
    <property type="match status" value="1"/>
</dbReference>
<dbReference type="InterPro" id="IPR015365">
    <property type="entry name" value="Elong-fact-P_C"/>
</dbReference>
<dbReference type="InterPro" id="IPR012340">
    <property type="entry name" value="NA-bd_OB-fold"/>
</dbReference>
<dbReference type="InterPro" id="IPR014722">
    <property type="entry name" value="Rib_uL2_dom2"/>
</dbReference>
<dbReference type="InterPro" id="IPR020599">
    <property type="entry name" value="Transl_elong_fac_P/YeiP"/>
</dbReference>
<dbReference type="InterPro" id="IPR013185">
    <property type="entry name" value="Transl_elong_KOW-like"/>
</dbReference>
<dbReference type="InterPro" id="IPR001059">
    <property type="entry name" value="Transl_elong_P/YeiP_cen"/>
</dbReference>
<dbReference type="InterPro" id="IPR013852">
    <property type="entry name" value="Transl_elong_P/YeiP_CS"/>
</dbReference>
<dbReference type="InterPro" id="IPR011768">
    <property type="entry name" value="Transl_elongation_fac_P"/>
</dbReference>
<dbReference type="InterPro" id="IPR008991">
    <property type="entry name" value="Translation_prot_SH3-like_sf"/>
</dbReference>
<dbReference type="NCBIfam" id="TIGR00038">
    <property type="entry name" value="efp"/>
    <property type="match status" value="1"/>
</dbReference>
<dbReference type="NCBIfam" id="NF001810">
    <property type="entry name" value="PRK00529.1"/>
    <property type="match status" value="1"/>
</dbReference>
<dbReference type="PANTHER" id="PTHR30053">
    <property type="entry name" value="ELONGATION FACTOR P"/>
    <property type="match status" value="1"/>
</dbReference>
<dbReference type="PANTHER" id="PTHR30053:SF12">
    <property type="entry name" value="ELONGATION FACTOR P (EF-P) FAMILY PROTEIN"/>
    <property type="match status" value="1"/>
</dbReference>
<dbReference type="Pfam" id="PF01132">
    <property type="entry name" value="EFP"/>
    <property type="match status" value="1"/>
</dbReference>
<dbReference type="Pfam" id="PF08207">
    <property type="entry name" value="EFP_N"/>
    <property type="match status" value="1"/>
</dbReference>
<dbReference type="Pfam" id="PF09285">
    <property type="entry name" value="Elong-fact-P_C"/>
    <property type="match status" value="1"/>
</dbReference>
<dbReference type="PIRSF" id="PIRSF005901">
    <property type="entry name" value="EF-P"/>
    <property type="match status" value="1"/>
</dbReference>
<dbReference type="SMART" id="SM01185">
    <property type="entry name" value="EFP"/>
    <property type="match status" value="1"/>
</dbReference>
<dbReference type="SMART" id="SM00841">
    <property type="entry name" value="Elong-fact-P_C"/>
    <property type="match status" value="1"/>
</dbReference>
<dbReference type="SUPFAM" id="SSF50249">
    <property type="entry name" value="Nucleic acid-binding proteins"/>
    <property type="match status" value="2"/>
</dbReference>
<dbReference type="SUPFAM" id="SSF50104">
    <property type="entry name" value="Translation proteins SH3-like domain"/>
    <property type="match status" value="1"/>
</dbReference>
<dbReference type="PROSITE" id="PS01275">
    <property type="entry name" value="EFP"/>
    <property type="match status" value="1"/>
</dbReference>